<name>PX11C_HUMAN</name>
<accession>Q96HA9</accession>
<accession>Q8NDM0</accession>
<proteinExistence type="evidence at protein level"/>
<organism>
    <name type="scientific">Homo sapiens</name>
    <name type="common">Human</name>
    <dbReference type="NCBI Taxonomy" id="9606"/>
    <lineage>
        <taxon>Eukaryota</taxon>
        <taxon>Metazoa</taxon>
        <taxon>Chordata</taxon>
        <taxon>Craniata</taxon>
        <taxon>Vertebrata</taxon>
        <taxon>Euteleostomi</taxon>
        <taxon>Mammalia</taxon>
        <taxon>Eutheria</taxon>
        <taxon>Euarchontoglires</taxon>
        <taxon>Primates</taxon>
        <taxon>Haplorrhini</taxon>
        <taxon>Catarrhini</taxon>
        <taxon>Hominidae</taxon>
        <taxon>Homo</taxon>
    </lineage>
</organism>
<gene>
    <name type="primary">PEX11G</name>
    <name type="synonym">PEX11C</name>
</gene>
<feature type="chain" id="PRO_0000105970" description="Peroxisomal membrane protein 11C">
    <location>
        <begin position="1"/>
        <end position="241"/>
    </location>
</feature>
<feature type="topological domain" description="Cytoplasmic" evidence="1">
    <location>
        <begin position="1"/>
        <end position="124"/>
    </location>
</feature>
<feature type="transmembrane region" description="Helical" evidence="1">
    <location>
        <begin position="125"/>
        <end position="149"/>
    </location>
</feature>
<feature type="topological domain" description="Lumenal" evidence="1">
    <location>
        <begin position="150"/>
        <end position="211"/>
    </location>
</feature>
<feature type="transmembrane region" description="Helical" evidence="1">
    <location>
        <begin position="212"/>
        <end position="227"/>
    </location>
</feature>
<feature type="topological domain" description="Cytoplasmic" evidence="1">
    <location>
        <begin position="228"/>
        <end position="241"/>
    </location>
</feature>
<feature type="splice variant" id="VSP_013539" description="In isoform 2." evidence="5">
    <location>
        <begin position="1"/>
        <end position="70"/>
    </location>
</feature>
<feature type="sequence variant" id="VAR_024560" description="In dbSNP:rs2303146.">
    <original>C</original>
    <variation>W</variation>
    <location>
        <position position="91"/>
    </location>
</feature>
<reference key="1">
    <citation type="journal article" date="2003" name="Biochem. Biophys. Res. Commun.">
        <title>cDNA cloning and characterization of the third isoform of human peroxin Pex11p.</title>
        <authorList>
            <person name="Tanaka A."/>
            <person name="Okumoto K."/>
            <person name="Fujiki Y."/>
        </authorList>
    </citation>
    <scope>NUCLEOTIDE SEQUENCE [MRNA] (ISOFORM 1)</scope>
    <scope>SUBCELLULAR LOCATION</scope>
    <scope>TOPOLOGY</scope>
</reference>
<reference key="2">
    <citation type="journal article" date="2007" name="BMC Genomics">
        <title>The full-ORF clone resource of the German cDNA consortium.</title>
        <authorList>
            <person name="Bechtel S."/>
            <person name="Rosenfelder H."/>
            <person name="Duda A."/>
            <person name="Schmidt C.P."/>
            <person name="Ernst U."/>
            <person name="Wellenreuther R."/>
            <person name="Mehrle A."/>
            <person name="Schuster C."/>
            <person name="Bahr A."/>
            <person name="Bloecker H."/>
            <person name="Heubner D."/>
            <person name="Hoerlein A."/>
            <person name="Michel G."/>
            <person name="Wedler H."/>
            <person name="Koehrer K."/>
            <person name="Ottenwaelder B."/>
            <person name="Poustka A."/>
            <person name="Wiemann S."/>
            <person name="Schupp I."/>
        </authorList>
    </citation>
    <scope>NUCLEOTIDE SEQUENCE [LARGE SCALE MRNA] (ISOFORM 2)</scope>
    <source>
        <tissue>Testis</tissue>
    </source>
</reference>
<reference key="3">
    <citation type="journal article" date="2004" name="Genome Res.">
        <title>The status, quality, and expansion of the NIH full-length cDNA project: the Mammalian Gene Collection (MGC).</title>
        <authorList>
            <consortium name="The MGC Project Team"/>
        </authorList>
    </citation>
    <scope>NUCLEOTIDE SEQUENCE [LARGE SCALE MRNA] (ISOFORM 1)</scope>
    <source>
        <tissue>Pancreas</tissue>
    </source>
</reference>
<reference key="4">
    <citation type="journal article" date="2002" name="Mol. Cell. Biol.">
        <title>PEX11alpha is required for peroxisome proliferation in response to 4-phenylbutyrate but is dispensable for peroxisome proliferator-activated receptor alpha-mediated peroxisome proliferation.</title>
        <authorList>
            <person name="Li X."/>
            <person name="Baumgart E."/>
            <person name="Dong G.-X."/>
            <person name="Morrell J.C."/>
            <person name="Jimenez-Sanchez G."/>
            <person name="Valle D."/>
            <person name="Smith K.D."/>
            <person name="Gould S.J."/>
        </authorList>
    </citation>
    <scope>SUBCELLULAR LOCATION</scope>
    <scope>TOPOLOGY</scope>
</reference>
<reference key="5">
    <citation type="journal article" date="2010" name="J. Cell Sci.">
        <title>PEX11 family members are membrane elongation factors that coordinate peroxisome proliferation and maintenance.</title>
        <authorList>
            <person name="Koch J."/>
            <person name="Pranjic K."/>
            <person name="Huber A."/>
            <person name="Ellinger A."/>
            <person name="Hartig A."/>
            <person name="Kragler F."/>
            <person name="Brocard C."/>
        </authorList>
    </citation>
    <scope>FUNCTION</scope>
    <scope>SUBUNIT</scope>
    <scope>INTERACTION WITH FIS1; PEX11A AND PEX11B</scope>
    <scope>SUBCELLULAR LOCATION</scope>
</reference>
<reference key="6">
    <citation type="journal article" date="2013" name="J. Proteome Res.">
        <title>Toward a comprehensive characterization of a human cancer cell phosphoproteome.</title>
        <authorList>
            <person name="Zhou H."/>
            <person name="Di Palma S."/>
            <person name="Preisinger C."/>
            <person name="Peng M."/>
            <person name="Polat A.N."/>
            <person name="Heck A.J."/>
            <person name="Mohammed S."/>
        </authorList>
    </citation>
    <scope>IDENTIFICATION BY MASS SPECTROMETRY [LARGE SCALE ANALYSIS]</scope>
    <source>
        <tissue>Erythroleukemia</tissue>
    </source>
</reference>
<dbReference type="EMBL" id="AB095921">
    <property type="protein sequence ID" value="BAD01558.1"/>
    <property type="molecule type" value="mRNA"/>
</dbReference>
<dbReference type="EMBL" id="AL833945">
    <property type="protein sequence ID" value="CAD38800.1"/>
    <property type="molecule type" value="mRNA"/>
</dbReference>
<dbReference type="EMBL" id="BC008780">
    <property type="protein sequence ID" value="AAH08780.1"/>
    <property type="molecule type" value="mRNA"/>
</dbReference>
<dbReference type="CCDS" id="CCDS12178.1">
    <molecule id="Q96HA9-1"/>
</dbReference>
<dbReference type="CCDS" id="CCDS77227.1">
    <molecule id="Q96HA9-2"/>
</dbReference>
<dbReference type="RefSeq" id="NP_001257468.1">
    <property type="nucleotide sequence ID" value="NM_001270539.1"/>
</dbReference>
<dbReference type="RefSeq" id="NP_001287810.1">
    <molecule id="Q96HA9-2"/>
    <property type="nucleotide sequence ID" value="NM_001300881.2"/>
</dbReference>
<dbReference type="RefSeq" id="NP_542393.1">
    <molecule id="Q96HA9-1"/>
    <property type="nucleotide sequence ID" value="NM_080662.4"/>
</dbReference>
<dbReference type="RefSeq" id="XP_011526730.1">
    <molecule id="Q96HA9-2"/>
    <property type="nucleotide sequence ID" value="XM_011528428.1"/>
</dbReference>
<dbReference type="RefSeq" id="XP_011526731.1">
    <molecule id="Q96HA9-2"/>
    <property type="nucleotide sequence ID" value="XM_011528429.3"/>
</dbReference>
<dbReference type="RefSeq" id="XP_011526733.1">
    <molecule id="Q96HA9-2"/>
    <property type="nucleotide sequence ID" value="XM_011528431.3"/>
</dbReference>
<dbReference type="RefSeq" id="XP_054178599.1">
    <molecule id="Q96HA9-2"/>
    <property type="nucleotide sequence ID" value="XM_054322624.1"/>
</dbReference>
<dbReference type="RefSeq" id="XP_054178600.1">
    <molecule id="Q96HA9-2"/>
    <property type="nucleotide sequence ID" value="XM_054322625.1"/>
</dbReference>
<dbReference type="RefSeq" id="XP_054178601.1">
    <molecule id="Q96HA9-2"/>
    <property type="nucleotide sequence ID" value="XM_054322626.1"/>
</dbReference>
<dbReference type="SMR" id="Q96HA9"/>
<dbReference type="BioGRID" id="124990">
    <property type="interactions" value="15"/>
</dbReference>
<dbReference type="FunCoup" id="Q96HA9">
    <property type="interactions" value="108"/>
</dbReference>
<dbReference type="IntAct" id="Q96HA9">
    <property type="interactions" value="9"/>
</dbReference>
<dbReference type="STRING" id="9606.ENSP00000221480"/>
<dbReference type="iPTMnet" id="Q96HA9"/>
<dbReference type="PhosphoSitePlus" id="Q96HA9"/>
<dbReference type="SwissPalm" id="Q96HA9"/>
<dbReference type="BioMuta" id="PEX11G"/>
<dbReference type="DMDM" id="62901102"/>
<dbReference type="jPOST" id="Q96HA9"/>
<dbReference type="MassIVE" id="Q96HA9"/>
<dbReference type="PaxDb" id="9606-ENSP00000221480"/>
<dbReference type="PeptideAtlas" id="Q96HA9"/>
<dbReference type="ProteomicsDB" id="76726">
    <molecule id="Q96HA9-1"/>
</dbReference>
<dbReference type="ProteomicsDB" id="76727">
    <molecule id="Q96HA9-2"/>
</dbReference>
<dbReference type="Pumba" id="Q96HA9"/>
<dbReference type="TopDownProteomics" id="Q96HA9-1">
    <molecule id="Q96HA9-1"/>
</dbReference>
<dbReference type="Antibodypedia" id="42625">
    <property type="antibodies" value="66 antibodies from 22 providers"/>
</dbReference>
<dbReference type="DNASU" id="92960"/>
<dbReference type="Ensembl" id="ENST00000221480.6">
    <molecule id="Q96HA9-1"/>
    <property type="protein sequence ID" value="ENSP00000221480.1"/>
    <property type="gene ID" value="ENSG00000104883.8"/>
</dbReference>
<dbReference type="Ensembl" id="ENST00000593942.5">
    <molecule id="Q96HA9-2"/>
    <property type="protein sequence ID" value="ENSP00000472216.1"/>
    <property type="gene ID" value="ENSG00000104883.8"/>
</dbReference>
<dbReference type="GeneID" id="92960"/>
<dbReference type="KEGG" id="hsa:92960"/>
<dbReference type="MANE-Select" id="ENST00000221480.6">
    <property type="protein sequence ID" value="ENSP00000221480.1"/>
    <property type="RefSeq nucleotide sequence ID" value="NM_080662.4"/>
    <property type="RefSeq protein sequence ID" value="NP_542393.1"/>
</dbReference>
<dbReference type="UCSC" id="uc002mgk.3">
    <molecule id="Q96HA9-1"/>
    <property type="organism name" value="human"/>
</dbReference>
<dbReference type="AGR" id="HGNC:20208"/>
<dbReference type="CTD" id="92960"/>
<dbReference type="DisGeNET" id="92960"/>
<dbReference type="GeneCards" id="PEX11G"/>
<dbReference type="HGNC" id="HGNC:20208">
    <property type="gene designation" value="PEX11G"/>
</dbReference>
<dbReference type="HPA" id="ENSG00000104883">
    <property type="expression patterns" value="Tissue enhanced (liver, testis)"/>
</dbReference>
<dbReference type="MIM" id="607583">
    <property type="type" value="gene"/>
</dbReference>
<dbReference type="neXtProt" id="NX_Q96HA9"/>
<dbReference type="OpenTargets" id="ENSG00000104883"/>
<dbReference type="PharmGKB" id="PA134987796"/>
<dbReference type="VEuPathDB" id="HostDB:ENSG00000104883"/>
<dbReference type="eggNOG" id="KOG4186">
    <property type="taxonomic scope" value="Eukaryota"/>
</dbReference>
<dbReference type="GeneTree" id="ENSGT00390000000427"/>
<dbReference type="HOGENOM" id="CLU_100620_0_0_1"/>
<dbReference type="InParanoid" id="Q96HA9"/>
<dbReference type="OMA" id="PIEKICW"/>
<dbReference type="OrthoDB" id="10005898at2759"/>
<dbReference type="PAN-GO" id="Q96HA9">
    <property type="GO annotations" value="2 GO annotations based on evolutionary models"/>
</dbReference>
<dbReference type="PhylomeDB" id="Q96HA9"/>
<dbReference type="TreeFam" id="TF316770"/>
<dbReference type="PathwayCommons" id="Q96HA9"/>
<dbReference type="SignaLink" id="Q96HA9"/>
<dbReference type="BioGRID-ORCS" id="92960">
    <property type="hits" value="19 hits in 1148 CRISPR screens"/>
</dbReference>
<dbReference type="GenomeRNAi" id="92960"/>
<dbReference type="Pharos" id="Q96HA9">
    <property type="development level" value="Tbio"/>
</dbReference>
<dbReference type="PRO" id="PR:Q96HA9"/>
<dbReference type="Proteomes" id="UP000005640">
    <property type="component" value="Chromosome 19"/>
</dbReference>
<dbReference type="RNAct" id="Q96HA9">
    <property type="molecule type" value="protein"/>
</dbReference>
<dbReference type="Bgee" id="ENSG00000104883">
    <property type="expression patterns" value="Expressed in right testis and 142 other cell types or tissues"/>
</dbReference>
<dbReference type="ExpressionAtlas" id="Q96HA9">
    <property type="expression patterns" value="baseline and differential"/>
</dbReference>
<dbReference type="GO" id="GO:0005778">
    <property type="term" value="C:peroxisomal membrane"/>
    <property type="evidence" value="ECO:0000314"/>
    <property type="project" value="UniProtKB"/>
</dbReference>
<dbReference type="GO" id="GO:0005777">
    <property type="term" value="C:peroxisome"/>
    <property type="evidence" value="ECO:0000314"/>
    <property type="project" value="UniProtKB"/>
</dbReference>
<dbReference type="GO" id="GO:0032991">
    <property type="term" value="C:protein-containing complex"/>
    <property type="evidence" value="ECO:0000314"/>
    <property type="project" value="UniProtKB"/>
</dbReference>
<dbReference type="GO" id="GO:0016559">
    <property type="term" value="P:peroxisome fission"/>
    <property type="evidence" value="ECO:0000314"/>
    <property type="project" value="UniProtKB"/>
</dbReference>
<dbReference type="GO" id="GO:0044375">
    <property type="term" value="P:regulation of peroxisome size"/>
    <property type="evidence" value="ECO:0000314"/>
    <property type="project" value="UniProtKB"/>
</dbReference>
<dbReference type="InterPro" id="IPR008733">
    <property type="entry name" value="PEX11"/>
</dbReference>
<dbReference type="InterPro" id="IPR026510">
    <property type="entry name" value="PEX11C_met"/>
</dbReference>
<dbReference type="PANTHER" id="PTHR20990">
    <property type="entry name" value="PEROXISOMAL BIOGENESIS FACTOR 11"/>
    <property type="match status" value="1"/>
</dbReference>
<dbReference type="PANTHER" id="PTHR20990:SF1">
    <property type="entry name" value="PEROXISOMAL MEMBRANE PROTEIN 11C"/>
    <property type="match status" value="1"/>
</dbReference>
<dbReference type="Pfam" id="PF05648">
    <property type="entry name" value="PEX11"/>
    <property type="match status" value="1"/>
</dbReference>
<evidence type="ECO:0000255" key="1"/>
<evidence type="ECO:0000269" key="2">
    <source>
    </source>
</evidence>
<evidence type="ECO:0000269" key="3">
    <source>
    </source>
</evidence>
<evidence type="ECO:0000269" key="4">
    <source>
    </source>
</evidence>
<evidence type="ECO:0000303" key="5">
    <source>
    </source>
</evidence>
<evidence type="ECO:0000305" key="6"/>
<comment type="function">
    <text evidence="4">Promotes membrane protrusion and elongation on the peroxisomal surface.</text>
</comment>
<comment type="subunit">
    <text evidence="4">Homodimer. Heterodimer with either PEX11A or PEX11B. Interacts with FIS1.</text>
</comment>
<comment type="interaction">
    <interactant intactId="EBI-17284886">
        <id>Q96HA9</id>
    </interactant>
    <interactant intactId="EBI-13059134">
        <id>Q13520</id>
        <label>AQP6</label>
    </interactant>
    <organismsDiffer>false</organismsDiffer>
    <experiments>3</experiments>
</comment>
<comment type="interaction">
    <interactant intactId="EBI-17284886">
        <id>Q96HA9</id>
    </interactant>
    <interactant intactId="EBI-781551">
        <id>Q9Y282</id>
        <label>ERGIC3</label>
    </interactant>
    <organismsDiffer>false</organismsDiffer>
    <experiments>3</experiments>
</comment>
<comment type="interaction">
    <interactant intactId="EBI-17284886">
        <id>Q96HA9</id>
    </interactant>
    <interactant intactId="EBI-12017638">
        <id>P48051</id>
        <label>KCNJ6</label>
    </interactant>
    <organismsDiffer>false</organismsDiffer>
    <experiments>3</experiments>
</comment>
<comment type="interaction">
    <interactant intactId="EBI-17284886">
        <id>Q96HA9</id>
    </interactant>
    <interactant intactId="EBI-8638294">
        <id>Q9NUH8</id>
        <label>TMEM14B</label>
    </interactant>
    <organismsDiffer>false</organismsDiffer>
    <experiments>3</experiments>
</comment>
<comment type="interaction">
    <interactant intactId="EBI-17284886">
        <id>Q96HA9</id>
    </interactant>
    <interactant intactId="EBI-2548832">
        <id>Q8N661</id>
        <label>TMEM86B</label>
    </interactant>
    <organismsDiffer>false</organismsDiffer>
    <experiments>3</experiments>
</comment>
<comment type="subcellular location">
    <subcellularLocation>
        <location evidence="2 3 4">Peroxisome membrane</location>
        <topology evidence="2 3">Multi-pass membrane protein</topology>
    </subcellularLocation>
</comment>
<comment type="alternative products">
    <event type="alternative splicing"/>
    <isoform>
        <id>Q96HA9-1</id>
        <name>1</name>
        <sequence type="displayed"/>
    </isoform>
    <isoform>
        <id>Q96HA9-2</id>
        <name>2</name>
        <sequence type="described" ref="VSP_013539"/>
    </isoform>
</comment>
<comment type="similarity">
    <text evidence="6">Belongs to the peroxin-11 family.</text>
</comment>
<protein>
    <recommendedName>
        <fullName>Peroxisomal membrane protein 11C</fullName>
    </recommendedName>
    <alternativeName>
        <fullName>Peroxin-11C</fullName>
    </alternativeName>
    <alternativeName>
        <fullName>Peroxisomal biogenesis factor 11C</fullName>
    </alternativeName>
    <alternativeName>
        <fullName>Protein PEX11 homolog gamma</fullName>
        <shortName>PEX11-gamma</shortName>
    </alternativeName>
</protein>
<keyword id="KW-0025">Alternative splicing</keyword>
<keyword id="KW-0472">Membrane</keyword>
<keyword id="KW-0576">Peroxisome</keyword>
<keyword id="KW-1267">Proteomics identification</keyword>
<keyword id="KW-1185">Reference proteome</keyword>
<keyword id="KW-0812">Transmembrane</keyword>
<keyword id="KW-1133">Transmembrane helix</keyword>
<sequence>MASLSGLASALESYRGRDRLIRVLGYCCQLVGGVLVEQCPARSEVGTRLLVVSTQLSHCRTILRLFDDLAMFVYTKQYGLGAQEEDAFVRCVSVLGNLADQLYYPCEHVAWAADARVLHVDSSRWWTLSTTLWALSLLLGVARSLWMLLKLRQRLRSPTAPFTSPLPRGKRRAMEAQMQSEALSLLSNLADLANAVHWLPRGVLWAGRFPPWLVGLMGTISSILSMYQAARAGGQAEATTP</sequence>